<accession>Q32B46</accession>
<protein>
    <recommendedName>
        <fullName evidence="1">Large ribosomal subunit protein uL6</fullName>
    </recommendedName>
    <alternativeName>
        <fullName evidence="2">50S ribosomal protein L6</fullName>
    </alternativeName>
</protein>
<dbReference type="EMBL" id="CP000034">
    <property type="protein sequence ID" value="ABB63459.1"/>
    <property type="molecule type" value="Genomic_DNA"/>
</dbReference>
<dbReference type="RefSeq" id="WP_000091945.1">
    <property type="nucleotide sequence ID" value="NC_007606.1"/>
</dbReference>
<dbReference type="RefSeq" id="YP_404950.1">
    <property type="nucleotide sequence ID" value="NC_007606.1"/>
</dbReference>
<dbReference type="SMR" id="Q32B46"/>
<dbReference type="STRING" id="300267.SDY_3481"/>
<dbReference type="EnsemblBacteria" id="ABB63459">
    <property type="protein sequence ID" value="ABB63459"/>
    <property type="gene ID" value="SDY_3481"/>
</dbReference>
<dbReference type="GeneID" id="86948169"/>
<dbReference type="KEGG" id="sdy:SDY_3481"/>
<dbReference type="PATRIC" id="fig|300267.13.peg.4134"/>
<dbReference type="HOGENOM" id="CLU_065464_1_2_6"/>
<dbReference type="Proteomes" id="UP000002716">
    <property type="component" value="Chromosome"/>
</dbReference>
<dbReference type="GO" id="GO:0022625">
    <property type="term" value="C:cytosolic large ribosomal subunit"/>
    <property type="evidence" value="ECO:0007669"/>
    <property type="project" value="TreeGrafter"/>
</dbReference>
<dbReference type="GO" id="GO:0019843">
    <property type="term" value="F:rRNA binding"/>
    <property type="evidence" value="ECO:0007669"/>
    <property type="project" value="UniProtKB-UniRule"/>
</dbReference>
<dbReference type="GO" id="GO:0003735">
    <property type="term" value="F:structural constituent of ribosome"/>
    <property type="evidence" value="ECO:0007669"/>
    <property type="project" value="InterPro"/>
</dbReference>
<dbReference type="GO" id="GO:0002181">
    <property type="term" value="P:cytoplasmic translation"/>
    <property type="evidence" value="ECO:0007669"/>
    <property type="project" value="TreeGrafter"/>
</dbReference>
<dbReference type="FunFam" id="3.90.930.12:FF:000001">
    <property type="entry name" value="50S ribosomal protein L6"/>
    <property type="match status" value="1"/>
</dbReference>
<dbReference type="FunFam" id="3.90.930.12:FF:000002">
    <property type="entry name" value="50S ribosomal protein L6"/>
    <property type="match status" value="1"/>
</dbReference>
<dbReference type="Gene3D" id="3.90.930.12">
    <property type="entry name" value="Ribosomal protein L6, alpha-beta domain"/>
    <property type="match status" value="2"/>
</dbReference>
<dbReference type="HAMAP" id="MF_01365_B">
    <property type="entry name" value="Ribosomal_uL6_B"/>
    <property type="match status" value="1"/>
</dbReference>
<dbReference type="InterPro" id="IPR000702">
    <property type="entry name" value="Ribosomal_uL6-like"/>
</dbReference>
<dbReference type="InterPro" id="IPR036789">
    <property type="entry name" value="Ribosomal_uL6-like_a/b-dom_sf"/>
</dbReference>
<dbReference type="InterPro" id="IPR020040">
    <property type="entry name" value="Ribosomal_uL6_a/b-dom"/>
</dbReference>
<dbReference type="InterPro" id="IPR019906">
    <property type="entry name" value="Ribosomal_uL6_bac-type"/>
</dbReference>
<dbReference type="InterPro" id="IPR002358">
    <property type="entry name" value="Ribosomal_uL6_CS"/>
</dbReference>
<dbReference type="NCBIfam" id="TIGR03654">
    <property type="entry name" value="L6_bact"/>
    <property type="match status" value="1"/>
</dbReference>
<dbReference type="PANTHER" id="PTHR11655">
    <property type="entry name" value="60S/50S RIBOSOMAL PROTEIN L6/L9"/>
    <property type="match status" value="1"/>
</dbReference>
<dbReference type="PANTHER" id="PTHR11655:SF14">
    <property type="entry name" value="LARGE RIBOSOMAL SUBUNIT PROTEIN UL6M"/>
    <property type="match status" value="1"/>
</dbReference>
<dbReference type="Pfam" id="PF00347">
    <property type="entry name" value="Ribosomal_L6"/>
    <property type="match status" value="2"/>
</dbReference>
<dbReference type="PIRSF" id="PIRSF002162">
    <property type="entry name" value="Ribosomal_L6"/>
    <property type="match status" value="1"/>
</dbReference>
<dbReference type="PRINTS" id="PR00059">
    <property type="entry name" value="RIBOSOMALL6"/>
</dbReference>
<dbReference type="SUPFAM" id="SSF56053">
    <property type="entry name" value="Ribosomal protein L6"/>
    <property type="match status" value="2"/>
</dbReference>
<dbReference type="PROSITE" id="PS00525">
    <property type="entry name" value="RIBOSOMAL_L6_1"/>
    <property type="match status" value="1"/>
</dbReference>
<gene>
    <name evidence="1" type="primary">rplF</name>
    <name type="ordered locus">SDY_3481</name>
</gene>
<proteinExistence type="inferred from homology"/>
<reference key="1">
    <citation type="journal article" date="2005" name="Nucleic Acids Res.">
        <title>Genome dynamics and diversity of Shigella species, the etiologic agents of bacillary dysentery.</title>
        <authorList>
            <person name="Yang F."/>
            <person name="Yang J."/>
            <person name="Zhang X."/>
            <person name="Chen L."/>
            <person name="Jiang Y."/>
            <person name="Yan Y."/>
            <person name="Tang X."/>
            <person name="Wang J."/>
            <person name="Xiong Z."/>
            <person name="Dong J."/>
            <person name="Xue Y."/>
            <person name="Zhu Y."/>
            <person name="Xu X."/>
            <person name="Sun L."/>
            <person name="Chen S."/>
            <person name="Nie H."/>
            <person name="Peng J."/>
            <person name="Xu J."/>
            <person name="Wang Y."/>
            <person name="Yuan Z."/>
            <person name="Wen Y."/>
            <person name="Yao Z."/>
            <person name="Shen Y."/>
            <person name="Qiang B."/>
            <person name="Hou Y."/>
            <person name="Yu J."/>
            <person name="Jin Q."/>
        </authorList>
    </citation>
    <scope>NUCLEOTIDE SEQUENCE [LARGE SCALE GENOMIC DNA]</scope>
    <source>
        <strain>Sd197</strain>
    </source>
</reference>
<feature type="chain" id="PRO_0000265299" description="Large ribosomal subunit protein uL6">
    <location>
        <begin position="1"/>
        <end position="177"/>
    </location>
</feature>
<feature type="modified residue" description="N6-acetyllysine" evidence="1">
    <location>
        <position position="44"/>
    </location>
</feature>
<sequence>MSRVAKAPVVVPAGVDVKINGQVITIKGKNGELTRTLNDAVEVKHADNTLTFGPRDGYADGWAQAGTARALLNSMVIGVTEGFTKKLQLVGVGYRAAVKGNVINLSLGFSHPVDHQLPAGITAECPTQTEIVLKGADKQVIGQVAADLRAYRRPEPYKGKGVRYADEVVRTKEAKKK</sequence>
<organism>
    <name type="scientific">Shigella dysenteriae serotype 1 (strain Sd197)</name>
    <dbReference type="NCBI Taxonomy" id="300267"/>
    <lineage>
        <taxon>Bacteria</taxon>
        <taxon>Pseudomonadati</taxon>
        <taxon>Pseudomonadota</taxon>
        <taxon>Gammaproteobacteria</taxon>
        <taxon>Enterobacterales</taxon>
        <taxon>Enterobacteriaceae</taxon>
        <taxon>Shigella</taxon>
    </lineage>
</organism>
<comment type="function">
    <text evidence="1">This protein binds to the 23S rRNA, and is important in its secondary structure. It is located near the subunit interface in the base of the L7/L12 stalk, and near the tRNA binding site of the peptidyltransferase center.</text>
</comment>
<comment type="subunit">
    <text evidence="1">Part of the 50S ribosomal subunit.</text>
</comment>
<comment type="similarity">
    <text evidence="1">Belongs to the universal ribosomal protein uL6 family.</text>
</comment>
<name>RL6_SHIDS</name>
<keyword id="KW-0007">Acetylation</keyword>
<keyword id="KW-1185">Reference proteome</keyword>
<keyword id="KW-0687">Ribonucleoprotein</keyword>
<keyword id="KW-0689">Ribosomal protein</keyword>
<keyword id="KW-0694">RNA-binding</keyword>
<keyword id="KW-0699">rRNA-binding</keyword>
<evidence type="ECO:0000255" key="1">
    <source>
        <dbReference type="HAMAP-Rule" id="MF_01365"/>
    </source>
</evidence>
<evidence type="ECO:0000305" key="2"/>